<evidence type="ECO:0000255" key="1">
    <source>
        <dbReference type="HAMAP-Rule" id="MF_01588"/>
    </source>
</evidence>
<proteinExistence type="inferred from homology"/>
<reference key="1">
    <citation type="journal article" date="2007" name="J. Bacteriol.">
        <title>Genome-wide transcriptional changes in Streptococcus gordonii in response to competence signaling peptide.</title>
        <authorList>
            <person name="Vickerman M.M."/>
            <person name="Iobst S."/>
            <person name="Jesionowski A.M."/>
            <person name="Gill S.R."/>
        </authorList>
    </citation>
    <scope>NUCLEOTIDE SEQUENCE [LARGE SCALE GENOMIC DNA]</scope>
    <source>
        <strain>Challis / ATCC 35105 / BCRC 15272 / CH1 / DL1 / V288</strain>
    </source>
</reference>
<name>DNLJ_STRGC</name>
<feature type="chain" id="PRO_0000340390" description="DNA ligase">
    <location>
        <begin position="1"/>
        <end position="652"/>
    </location>
</feature>
<feature type="domain" description="BRCT" evidence="1">
    <location>
        <begin position="577"/>
        <end position="652"/>
    </location>
</feature>
<feature type="active site" description="N6-AMP-lysine intermediate" evidence="1">
    <location>
        <position position="109"/>
    </location>
</feature>
<feature type="binding site" evidence="1">
    <location>
        <begin position="29"/>
        <end position="33"/>
    </location>
    <ligand>
        <name>NAD(+)</name>
        <dbReference type="ChEBI" id="CHEBI:57540"/>
    </ligand>
</feature>
<feature type="binding site" evidence="1">
    <location>
        <begin position="78"/>
        <end position="79"/>
    </location>
    <ligand>
        <name>NAD(+)</name>
        <dbReference type="ChEBI" id="CHEBI:57540"/>
    </ligand>
</feature>
<feature type="binding site" evidence="1">
    <location>
        <position position="107"/>
    </location>
    <ligand>
        <name>NAD(+)</name>
        <dbReference type="ChEBI" id="CHEBI:57540"/>
    </ligand>
</feature>
<feature type="binding site" evidence="1">
    <location>
        <position position="130"/>
    </location>
    <ligand>
        <name>NAD(+)</name>
        <dbReference type="ChEBI" id="CHEBI:57540"/>
    </ligand>
</feature>
<feature type="binding site" evidence="1">
    <location>
        <position position="164"/>
    </location>
    <ligand>
        <name>NAD(+)</name>
        <dbReference type="ChEBI" id="CHEBI:57540"/>
    </ligand>
</feature>
<feature type="binding site" evidence="1">
    <location>
        <position position="278"/>
    </location>
    <ligand>
        <name>NAD(+)</name>
        <dbReference type="ChEBI" id="CHEBI:57540"/>
    </ligand>
</feature>
<feature type="binding site" evidence="1">
    <location>
        <position position="302"/>
    </location>
    <ligand>
        <name>NAD(+)</name>
        <dbReference type="ChEBI" id="CHEBI:57540"/>
    </ligand>
</feature>
<feature type="binding site" evidence="1">
    <location>
        <position position="395"/>
    </location>
    <ligand>
        <name>Zn(2+)</name>
        <dbReference type="ChEBI" id="CHEBI:29105"/>
    </ligand>
</feature>
<feature type="binding site" evidence="1">
    <location>
        <position position="398"/>
    </location>
    <ligand>
        <name>Zn(2+)</name>
        <dbReference type="ChEBI" id="CHEBI:29105"/>
    </ligand>
</feature>
<feature type="binding site" evidence="1">
    <location>
        <position position="413"/>
    </location>
    <ligand>
        <name>Zn(2+)</name>
        <dbReference type="ChEBI" id="CHEBI:29105"/>
    </ligand>
</feature>
<feature type="binding site" evidence="1">
    <location>
        <position position="418"/>
    </location>
    <ligand>
        <name>Zn(2+)</name>
        <dbReference type="ChEBI" id="CHEBI:29105"/>
    </ligand>
</feature>
<organism>
    <name type="scientific">Streptococcus gordonii (strain Challis / ATCC 35105 / BCRC 15272 / CH1 / DL1 / V288)</name>
    <dbReference type="NCBI Taxonomy" id="467705"/>
    <lineage>
        <taxon>Bacteria</taxon>
        <taxon>Bacillati</taxon>
        <taxon>Bacillota</taxon>
        <taxon>Bacilli</taxon>
        <taxon>Lactobacillales</taxon>
        <taxon>Streptococcaceae</taxon>
        <taxon>Streptococcus</taxon>
    </lineage>
</organism>
<gene>
    <name evidence="1" type="primary">ligA</name>
    <name type="ordered locus">SGO_1390</name>
</gene>
<keyword id="KW-0227">DNA damage</keyword>
<keyword id="KW-0234">DNA repair</keyword>
<keyword id="KW-0235">DNA replication</keyword>
<keyword id="KW-0436">Ligase</keyword>
<keyword id="KW-0460">Magnesium</keyword>
<keyword id="KW-0464">Manganese</keyword>
<keyword id="KW-0479">Metal-binding</keyword>
<keyword id="KW-0520">NAD</keyword>
<keyword id="KW-1185">Reference proteome</keyword>
<keyword id="KW-0862">Zinc</keyword>
<comment type="function">
    <text evidence="1">DNA ligase that catalyzes the formation of phosphodiester linkages between 5'-phosphoryl and 3'-hydroxyl groups in double-stranded DNA using NAD as a coenzyme and as the energy source for the reaction. It is essential for DNA replication and repair of damaged DNA.</text>
</comment>
<comment type="catalytic activity">
    <reaction evidence="1">
        <text>NAD(+) + (deoxyribonucleotide)n-3'-hydroxyl + 5'-phospho-(deoxyribonucleotide)m = (deoxyribonucleotide)n+m + AMP + beta-nicotinamide D-nucleotide.</text>
        <dbReference type="EC" id="6.5.1.2"/>
    </reaction>
</comment>
<comment type="cofactor">
    <cofactor evidence="1">
        <name>Mg(2+)</name>
        <dbReference type="ChEBI" id="CHEBI:18420"/>
    </cofactor>
    <cofactor evidence="1">
        <name>Mn(2+)</name>
        <dbReference type="ChEBI" id="CHEBI:29035"/>
    </cofactor>
</comment>
<comment type="similarity">
    <text evidence="1">Belongs to the NAD-dependent DNA ligase family. LigA subfamily.</text>
</comment>
<accession>A8AY10</accession>
<sequence>MKDRMSELVSLLNRYAHEYYTKDAPSVSDSEYDQLYRELVSLEEQYPNEILPESPTHRVGGKVLDGFEKYQHQYPLYSLQDAFSRAELVAFDERVRKEFPDASYLCELKIDGLSISLAYENGILVAGATRGDGSIGENITENLKRVKDIPLTLPEPLTITVRGECYMPKASFDAVNQLRQENGEAEFANPRNAAAGTLRQLDTSVVAKRNLATFLYQEASPTSEATQEDVLEKLSQLGFSVNEKRVLASTIDQVWDFIEKVGQERDKLPYEIDGIVIKVNHLAAQEELGFTVKAPKWAIAYKFPAEEKEAQLLSVDWTVGRTGVVTPTANLTPVQLAGTTVSRATLHNVDYIREKDIRKDDTVIVYKAGDIIPAVLRVVEGKRVSDEHLDVPSKCPSCQSDLLHFEDEVALRCINPLCPAQIMEGLAHFASRDAMNISGLGPAVVEKLFAKDLVRDVAGIYRLNIEDLLQLENFKEKSANKLYNAIQASKSNSAEKLLFGLGIRHVGSKASRILLEKFHDIPSLAQAEQEEIVSIDSLGMVIAKSLHSYFAQEGTQILLKELEEAGVNLAYLGEKAAADAVLSGKTVVLTGKLETLTRTQAKEKLLRLGANVAGSVSKKTDLVIAGADAGSKLAKAQELGIEIQDEAWLEQL</sequence>
<dbReference type="EC" id="6.5.1.2" evidence="1"/>
<dbReference type="EMBL" id="CP000725">
    <property type="protein sequence ID" value="ABV09491.1"/>
    <property type="molecule type" value="Genomic_DNA"/>
</dbReference>
<dbReference type="RefSeq" id="WP_012130476.1">
    <property type="nucleotide sequence ID" value="NC_009785.1"/>
</dbReference>
<dbReference type="SMR" id="A8AY10"/>
<dbReference type="STRING" id="467705.SGO_1390"/>
<dbReference type="KEGG" id="sgo:SGO_1390"/>
<dbReference type="eggNOG" id="COG0272">
    <property type="taxonomic scope" value="Bacteria"/>
</dbReference>
<dbReference type="HOGENOM" id="CLU_007764_2_1_9"/>
<dbReference type="Proteomes" id="UP000001131">
    <property type="component" value="Chromosome"/>
</dbReference>
<dbReference type="GO" id="GO:0005829">
    <property type="term" value="C:cytosol"/>
    <property type="evidence" value="ECO:0007669"/>
    <property type="project" value="TreeGrafter"/>
</dbReference>
<dbReference type="GO" id="GO:0003677">
    <property type="term" value="F:DNA binding"/>
    <property type="evidence" value="ECO:0007669"/>
    <property type="project" value="InterPro"/>
</dbReference>
<dbReference type="GO" id="GO:0003911">
    <property type="term" value="F:DNA ligase (NAD+) activity"/>
    <property type="evidence" value="ECO:0007669"/>
    <property type="project" value="UniProtKB-UniRule"/>
</dbReference>
<dbReference type="GO" id="GO:0046872">
    <property type="term" value="F:metal ion binding"/>
    <property type="evidence" value="ECO:0007669"/>
    <property type="project" value="UniProtKB-KW"/>
</dbReference>
<dbReference type="GO" id="GO:0006281">
    <property type="term" value="P:DNA repair"/>
    <property type="evidence" value="ECO:0007669"/>
    <property type="project" value="UniProtKB-KW"/>
</dbReference>
<dbReference type="GO" id="GO:0006260">
    <property type="term" value="P:DNA replication"/>
    <property type="evidence" value="ECO:0007669"/>
    <property type="project" value="UniProtKB-KW"/>
</dbReference>
<dbReference type="CDD" id="cd17748">
    <property type="entry name" value="BRCT_DNA_ligase_like"/>
    <property type="match status" value="1"/>
</dbReference>
<dbReference type="CDD" id="cd00114">
    <property type="entry name" value="LIGANc"/>
    <property type="match status" value="1"/>
</dbReference>
<dbReference type="FunFam" id="1.10.150.20:FF:000006">
    <property type="entry name" value="DNA ligase"/>
    <property type="match status" value="1"/>
</dbReference>
<dbReference type="FunFam" id="1.10.150.20:FF:000007">
    <property type="entry name" value="DNA ligase"/>
    <property type="match status" value="1"/>
</dbReference>
<dbReference type="FunFam" id="2.40.50.140:FF:000012">
    <property type="entry name" value="DNA ligase"/>
    <property type="match status" value="1"/>
</dbReference>
<dbReference type="FunFam" id="3.30.470.30:FF:000001">
    <property type="entry name" value="DNA ligase"/>
    <property type="match status" value="1"/>
</dbReference>
<dbReference type="Gene3D" id="6.20.10.30">
    <property type="match status" value="1"/>
</dbReference>
<dbReference type="Gene3D" id="1.10.150.20">
    <property type="entry name" value="5' to 3' exonuclease, C-terminal subdomain"/>
    <property type="match status" value="2"/>
</dbReference>
<dbReference type="Gene3D" id="3.40.50.10190">
    <property type="entry name" value="BRCT domain"/>
    <property type="match status" value="1"/>
</dbReference>
<dbReference type="Gene3D" id="3.30.470.30">
    <property type="entry name" value="DNA ligase/mRNA capping enzyme"/>
    <property type="match status" value="1"/>
</dbReference>
<dbReference type="Gene3D" id="1.10.287.610">
    <property type="entry name" value="Helix hairpin bin"/>
    <property type="match status" value="1"/>
</dbReference>
<dbReference type="Gene3D" id="2.40.50.140">
    <property type="entry name" value="Nucleic acid-binding proteins"/>
    <property type="match status" value="1"/>
</dbReference>
<dbReference type="HAMAP" id="MF_01588">
    <property type="entry name" value="DNA_ligase_A"/>
    <property type="match status" value="1"/>
</dbReference>
<dbReference type="InterPro" id="IPR001357">
    <property type="entry name" value="BRCT_dom"/>
</dbReference>
<dbReference type="InterPro" id="IPR036420">
    <property type="entry name" value="BRCT_dom_sf"/>
</dbReference>
<dbReference type="InterPro" id="IPR041663">
    <property type="entry name" value="DisA/LigA_HHH"/>
</dbReference>
<dbReference type="InterPro" id="IPR001679">
    <property type="entry name" value="DNA_ligase"/>
</dbReference>
<dbReference type="InterPro" id="IPR018239">
    <property type="entry name" value="DNA_ligase_AS"/>
</dbReference>
<dbReference type="InterPro" id="IPR033136">
    <property type="entry name" value="DNA_ligase_CS"/>
</dbReference>
<dbReference type="InterPro" id="IPR013839">
    <property type="entry name" value="DNAligase_adenylation"/>
</dbReference>
<dbReference type="InterPro" id="IPR013840">
    <property type="entry name" value="DNAligase_N"/>
</dbReference>
<dbReference type="InterPro" id="IPR003583">
    <property type="entry name" value="Hlx-hairpin-Hlx_DNA-bd_motif"/>
</dbReference>
<dbReference type="InterPro" id="IPR012340">
    <property type="entry name" value="NA-bd_OB-fold"/>
</dbReference>
<dbReference type="InterPro" id="IPR004150">
    <property type="entry name" value="NAD_DNA_ligase_OB"/>
</dbReference>
<dbReference type="InterPro" id="IPR010994">
    <property type="entry name" value="RuvA_2-like"/>
</dbReference>
<dbReference type="InterPro" id="IPR004149">
    <property type="entry name" value="Znf_DNAligase_C4"/>
</dbReference>
<dbReference type="NCBIfam" id="TIGR00575">
    <property type="entry name" value="dnlj"/>
    <property type="match status" value="1"/>
</dbReference>
<dbReference type="NCBIfam" id="NF005932">
    <property type="entry name" value="PRK07956.1"/>
    <property type="match status" value="1"/>
</dbReference>
<dbReference type="PANTHER" id="PTHR23389">
    <property type="entry name" value="CHROMOSOME TRANSMISSION FIDELITY FACTOR 18"/>
    <property type="match status" value="1"/>
</dbReference>
<dbReference type="PANTHER" id="PTHR23389:SF9">
    <property type="entry name" value="DNA LIGASE"/>
    <property type="match status" value="1"/>
</dbReference>
<dbReference type="Pfam" id="PF00533">
    <property type="entry name" value="BRCT"/>
    <property type="match status" value="1"/>
</dbReference>
<dbReference type="Pfam" id="PF01653">
    <property type="entry name" value="DNA_ligase_aden"/>
    <property type="match status" value="1"/>
</dbReference>
<dbReference type="Pfam" id="PF03120">
    <property type="entry name" value="DNA_ligase_OB"/>
    <property type="match status" value="1"/>
</dbReference>
<dbReference type="Pfam" id="PF03119">
    <property type="entry name" value="DNA_ligase_ZBD"/>
    <property type="match status" value="1"/>
</dbReference>
<dbReference type="Pfam" id="PF12826">
    <property type="entry name" value="HHH_2"/>
    <property type="match status" value="1"/>
</dbReference>
<dbReference type="Pfam" id="PF14520">
    <property type="entry name" value="HHH_5"/>
    <property type="match status" value="1"/>
</dbReference>
<dbReference type="PIRSF" id="PIRSF001604">
    <property type="entry name" value="LigA"/>
    <property type="match status" value="1"/>
</dbReference>
<dbReference type="SMART" id="SM00292">
    <property type="entry name" value="BRCT"/>
    <property type="match status" value="1"/>
</dbReference>
<dbReference type="SMART" id="SM00278">
    <property type="entry name" value="HhH1"/>
    <property type="match status" value="3"/>
</dbReference>
<dbReference type="SMART" id="SM00532">
    <property type="entry name" value="LIGANc"/>
    <property type="match status" value="1"/>
</dbReference>
<dbReference type="SUPFAM" id="SSF52113">
    <property type="entry name" value="BRCT domain"/>
    <property type="match status" value="1"/>
</dbReference>
<dbReference type="SUPFAM" id="SSF56091">
    <property type="entry name" value="DNA ligase/mRNA capping enzyme, catalytic domain"/>
    <property type="match status" value="1"/>
</dbReference>
<dbReference type="SUPFAM" id="SSF50249">
    <property type="entry name" value="Nucleic acid-binding proteins"/>
    <property type="match status" value="1"/>
</dbReference>
<dbReference type="SUPFAM" id="SSF47781">
    <property type="entry name" value="RuvA domain 2-like"/>
    <property type="match status" value="1"/>
</dbReference>
<dbReference type="PROSITE" id="PS50172">
    <property type="entry name" value="BRCT"/>
    <property type="match status" value="1"/>
</dbReference>
<dbReference type="PROSITE" id="PS01055">
    <property type="entry name" value="DNA_LIGASE_N1"/>
    <property type="match status" value="1"/>
</dbReference>
<dbReference type="PROSITE" id="PS01056">
    <property type="entry name" value="DNA_LIGASE_N2"/>
    <property type="match status" value="1"/>
</dbReference>
<protein>
    <recommendedName>
        <fullName evidence="1">DNA ligase</fullName>
        <ecNumber evidence="1">6.5.1.2</ecNumber>
    </recommendedName>
    <alternativeName>
        <fullName evidence="1">Polydeoxyribonucleotide synthase [NAD(+)]</fullName>
    </alternativeName>
</protein>